<organism>
    <name type="scientific">Zea mays</name>
    <name type="common">Maize</name>
    <dbReference type="NCBI Taxonomy" id="4577"/>
    <lineage>
        <taxon>Eukaryota</taxon>
        <taxon>Viridiplantae</taxon>
        <taxon>Streptophyta</taxon>
        <taxon>Embryophyta</taxon>
        <taxon>Tracheophyta</taxon>
        <taxon>Spermatophyta</taxon>
        <taxon>Magnoliopsida</taxon>
        <taxon>Liliopsida</taxon>
        <taxon>Poales</taxon>
        <taxon>Poaceae</taxon>
        <taxon>PACMAD clade</taxon>
        <taxon>Panicoideae</taxon>
        <taxon>Andropogonodae</taxon>
        <taxon>Andropogoneae</taxon>
        <taxon>Tripsacinae</taxon>
        <taxon>Zea</taxon>
    </lineage>
</organism>
<comment type="function">
    <text evidence="1">Mediates the deacetylation of lysine residues on the N-terminal part of the core histones (H2A, H2B, H3 and H4). Histone deacetylation gives a tag for epigenetic repression and plays an important role in transcriptional regulation, cell cycle progression and developmental events (By similarity).</text>
</comment>
<comment type="subunit">
    <text evidence="1">Multimer. Possibly forms a homotrimer with HDT1 and/or HDT3 (By similarity).</text>
</comment>
<comment type="subcellular location">
    <subcellularLocation>
        <location evidence="1">Nucleus</location>
        <location evidence="1">Nucleolus</location>
    </subcellularLocation>
</comment>
<comment type="similarity">
    <text evidence="4">Belongs to the histone deacetylase HD2 family.</text>
</comment>
<reference key="1">
    <citation type="journal article" date="2001" name="Planta">
        <title>Comparative analysis of HD2 type histone deacetylases in higher plants.</title>
        <authorList>
            <person name="Dangl M."/>
            <person name="Brosch G."/>
            <person name="Haas H."/>
            <person name="Loidl P."/>
            <person name="Lusser A."/>
        </authorList>
    </citation>
    <scope>NUCLEOTIDE SEQUENCE [MRNA]</scope>
</reference>
<reference key="2">
    <citation type="journal article" date="1996" name="Biochemistry">
        <title>Purification and characterization of a high molecular weight histone deacetylase complex (HD2) of maize embryos.</title>
        <authorList>
            <person name="Brosch G."/>
            <person name="Lusser A."/>
            <person name="Goralik-Schramel M."/>
            <person name="Loidl P."/>
        </authorList>
    </citation>
    <scope>PROTEIN SEQUENCE OF 81-91</scope>
</reference>
<feature type="chain" id="PRO_0000195209" description="Histone deacetylase HDT2">
    <location>
        <begin position="1"/>
        <end position="303"/>
    </location>
</feature>
<feature type="zinc finger region" description="C2H2-type" evidence="2">
    <location>
        <begin position="277"/>
        <end position="300"/>
    </location>
</feature>
<feature type="region of interest" description="Disordered" evidence="3">
    <location>
        <begin position="100"/>
        <end position="282"/>
    </location>
</feature>
<feature type="compositionally biased region" description="Acidic residues" evidence="3">
    <location>
        <begin position="100"/>
        <end position="112"/>
    </location>
</feature>
<feature type="compositionally biased region" description="Basic and acidic residues" evidence="3">
    <location>
        <begin position="119"/>
        <end position="133"/>
    </location>
</feature>
<feature type="compositionally biased region" description="Acidic residues" evidence="3">
    <location>
        <begin position="154"/>
        <end position="203"/>
    </location>
</feature>
<feature type="compositionally biased region" description="Basic and acidic residues" evidence="3">
    <location>
        <begin position="204"/>
        <end position="217"/>
    </location>
</feature>
<keyword id="KW-0156">Chromatin regulator</keyword>
<keyword id="KW-0903">Direct protein sequencing</keyword>
<keyword id="KW-0378">Hydrolase</keyword>
<keyword id="KW-0479">Metal-binding</keyword>
<keyword id="KW-0539">Nucleus</keyword>
<keyword id="KW-0597">Phosphoprotein</keyword>
<keyword id="KW-1185">Reference proteome</keyword>
<keyword id="KW-0678">Repressor</keyword>
<keyword id="KW-0804">Transcription</keyword>
<keyword id="KW-0805">Transcription regulation</keyword>
<keyword id="KW-0862">Zinc</keyword>
<keyword id="KW-0863">Zinc-finger</keyword>
<name>HDT2_MAIZE</name>
<evidence type="ECO:0000250" key="1"/>
<evidence type="ECO:0000255" key="2">
    <source>
        <dbReference type="PROSITE-ProRule" id="PRU00042"/>
    </source>
</evidence>
<evidence type="ECO:0000256" key="3">
    <source>
        <dbReference type="SAM" id="MobiDB-lite"/>
    </source>
</evidence>
<evidence type="ECO:0000305" key="4"/>
<sequence length="303" mass="32613">MEFWGLEVKPGSTVKCEPGHGFILHVSQAALGESKKSDSALMYVKVDDKKLAIGTLSIDKYPQIQFDLVFNKEFELSHTSKTTSVFFSGYKVEQPIEGDEMDLDSEDEEEELNIPVIKENGKADGKEEQKNQEKAVAATASKSSLGLEKKSKDDSDDSDEDESDDSDEDDSDDSDEGEGLSPDEGDDDSSDEDDTSDDDEEETPTPKKPEAGKKRGAENALKTPLSDKKAKVATPPAQKTGGKKGATHVATPHPAKGKTPANNDKLTEKSPKSGGSVPCKSCSKTFNSEMALQAHSKAKHGAK</sequence>
<accession>Q9M4U5</accession>
<gene>
    <name type="primary">HDT2</name>
    <name type="synonym">HD2B</name>
</gene>
<dbReference type="EMBL" id="AF254072">
    <property type="protein sequence ID" value="AAF68624.1"/>
    <property type="molecule type" value="mRNA"/>
</dbReference>
<dbReference type="RefSeq" id="NP_001105631.1">
    <property type="nucleotide sequence ID" value="NM_001112161.1"/>
</dbReference>
<dbReference type="SMR" id="Q9M4U5"/>
<dbReference type="FunCoup" id="Q9M4U5">
    <property type="interactions" value="2476"/>
</dbReference>
<dbReference type="STRING" id="4577.Q9M4U5"/>
<dbReference type="iPTMnet" id="Q9M4U5"/>
<dbReference type="PaxDb" id="4577-GRMZM2G100146_P01"/>
<dbReference type="GeneID" id="542636"/>
<dbReference type="KEGG" id="zma:542636"/>
<dbReference type="eggNOG" id="ENOG502QVH6">
    <property type="taxonomic scope" value="Eukaryota"/>
</dbReference>
<dbReference type="InParanoid" id="Q9M4U5"/>
<dbReference type="OrthoDB" id="2019803at2759"/>
<dbReference type="SABIO-RK" id="Q9M4U5"/>
<dbReference type="Proteomes" id="UP000007305">
    <property type="component" value="Unplaced"/>
</dbReference>
<dbReference type="ExpressionAtlas" id="Q9M4U5">
    <property type="expression patterns" value="baseline and differential"/>
</dbReference>
<dbReference type="GO" id="GO:0005730">
    <property type="term" value="C:nucleolus"/>
    <property type="evidence" value="ECO:0007669"/>
    <property type="project" value="UniProtKB-SubCell"/>
</dbReference>
<dbReference type="GO" id="GO:0016787">
    <property type="term" value="F:hydrolase activity"/>
    <property type="evidence" value="ECO:0007669"/>
    <property type="project" value="UniProtKB-KW"/>
</dbReference>
<dbReference type="GO" id="GO:0008270">
    <property type="term" value="F:zinc ion binding"/>
    <property type="evidence" value="ECO:0007669"/>
    <property type="project" value="UniProtKB-KW"/>
</dbReference>
<dbReference type="GO" id="GO:0006325">
    <property type="term" value="P:chromatin organization"/>
    <property type="evidence" value="ECO:0007669"/>
    <property type="project" value="UniProtKB-KW"/>
</dbReference>
<dbReference type="FunFam" id="2.60.120.340:FF:000004">
    <property type="entry name" value="Histone deacetylase HDT1"/>
    <property type="match status" value="1"/>
</dbReference>
<dbReference type="Gene3D" id="2.60.120.340">
    <property type="entry name" value="Nucleoplasmin core domain"/>
    <property type="match status" value="1"/>
</dbReference>
<dbReference type="InterPro" id="IPR041232">
    <property type="entry name" value="NPL"/>
</dbReference>
<dbReference type="InterPro" id="IPR013087">
    <property type="entry name" value="Znf_C2H2_type"/>
</dbReference>
<dbReference type="Pfam" id="PF17800">
    <property type="entry name" value="NPL"/>
    <property type="match status" value="1"/>
</dbReference>
<dbReference type="PROSITE" id="PS00028">
    <property type="entry name" value="ZINC_FINGER_C2H2_1"/>
    <property type="match status" value="1"/>
</dbReference>
<dbReference type="PROSITE" id="PS50157">
    <property type="entry name" value="ZINC_FINGER_C2H2_2"/>
    <property type="match status" value="1"/>
</dbReference>
<proteinExistence type="evidence at protein level"/>
<protein>
    <recommendedName>
        <fullName>Histone deacetylase HDT2</fullName>
    </recommendedName>
    <alternativeName>
        <fullName>Histone deacetylase 2b</fullName>
        <shortName>HD2b</shortName>
    </alternativeName>
    <alternativeName>
        <fullName>Zm-HD2b</fullName>
    </alternativeName>
</protein>